<keyword id="KW-1185">Reference proteome</keyword>
<name>FB125_ARATH</name>
<gene>
    <name type="ordered locus">At2g33705</name>
    <name type="ORF">T1B8</name>
</gene>
<sequence length="69" mass="8036">MMKTRACSNPMNEGVNLEQIPYDLVLEILLKLSAKSIARFRCVSKLWDSTFRSRYFTELLFIISSSMQI</sequence>
<dbReference type="EMBL" id="U78721">
    <property type="status" value="NOT_ANNOTATED_CDS"/>
    <property type="molecule type" value="Genomic_DNA"/>
</dbReference>
<dbReference type="EMBL" id="CP002685">
    <property type="protein sequence ID" value="AEC08871.1"/>
    <property type="molecule type" value="Genomic_DNA"/>
</dbReference>
<dbReference type="RefSeq" id="NP_973591.1">
    <property type="nucleotide sequence ID" value="NM_201862.1"/>
</dbReference>
<dbReference type="SMR" id="Q3EBP0"/>
<dbReference type="FunCoup" id="Q3EBP0">
    <property type="interactions" value="6"/>
</dbReference>
<dbReference type="PaxDb" id="3702-AT2G33705.1"/>
<dbReference type="EnsemblPlants" id="AT2G33705.1">
    <property type="protein sequence ID" value="AT2G33705.1"/>
    <property type="gene ID" value="AT2G33705"/>
</dbReference>
<dbReference type="GeneID" id="2745577"/>
<dbReference type="Gramene" id="AT2G33705.1">
    <property type="protein sequence ID" value="AT2G33705.1"/>
    <property type="gene ID" value="AT2G33705"/>
</dbReference>
<dbReference type="KEGG" id="ath:AT2G33705"/>
<dbReference type="Araport" id="AT2G33705"/>
<dbReference type="TAIR" id="AT2G33705"/>
<dbReference type="HOGENOM" id="CLU_2779318_0_0_1"/>
<dbReference type="InParanoid" id="Q3EBP0"/>
<dbReference type="OrthoDB" id="1113663at2759"/>
<dbReference type="PhylomeDB" id="Q3EBP0"/>
<dbReference type="PRO" id="PR:Q3EBP0"/>
<dbReference type="Proteomes" id="UP000006548">
    <property type="component" value="Chromosome 2"/>
</dbReference>
<dbReference type="ExpressionAtlas" id="Q3EBP0">
    <property type="expression patterns" value="baseline"/>
</dbReference>
<dbReference type="Gene3D" id="1.20.1280.50">
    <property type="match status" value="1"/>
</dbReference>
<dbReference type="InterPro" id="IPR036047">
    <property type="entry name" value="F-box-like_dom_sf"/>
</dbReference>
<dbReference type="InterPro" id="IPR001810">
    <property type="entry name" value="F-box_dom"/>
</dbReference>
<dbReference type="PANTHER" id="PTHR31111">
    <property type="entry name" value="BNAA05G37150D PROTEIN-RELATED"/>
    <property type="match status" value="1"/>
</dbReference>
<dbReference type="PANTHER" id="PTHR31111:SF132">
    <property type="entry name" value="F-BOX ASSOCIATED UBIQUITINATION EFFECTOR FAMILY PROTEIN-RELATED"/>
    <property type="match status" value="1"/>
</dbReference>
<dbReference type="Pfam" id="PF00646">
    <property type="entry name" value="F-box"/>
    <property type="match status" value="1"/>
</dbReference>
<dbReference type="SMART" id="SM00256">
    <property type="entry name" value="FBOX"/>
    <property type="match status" value="1"/>
</dbReference>
<dbReference type="SUPFAM" id="SSF81383">
    <property type="entry name" value="F-box domain"/>
    <property type="match status" value="1"/>
</dbReference>
<dbReference type="PROSITE" id="PS50181">
    <property type="entry name" value="FBOX"/>
    <property type="match status" value="1"/>
</dbReference>
<protein>
    <recommendedName>
        <fullName>Putative F-box protein At2g33705</fullName>
    </recommendedName>
</protein>
<feature type="chain" id="PRO_0000283396" description="Putative F-box protein At2g33705">
    <location>
        <begin position="1"/>
        <end position="69"/>
    </location>
</feature>
<feature type="domain" description="F-box" evidence="1">
    <location>
        <begin position="14"/>
        <end position="59"/>
    </location>
</feature>
<proteinExistence type="predicted"/>
<accession>Q3EBP0</accession>
<evidence type="ECO:0000255" key="1">
    <source>
        <dbReference type="PROSITE-ProRule" id="PRU00080"/>
    </source>
</evidence>
<reference key="1">
    <citation type="journal article" date="1999" name="Nature">
        <title>Sequence and analysis of chromosome 2 of the plant Arabidopsis thaliana.</title>
        <authorList>
            <person name="Lin X."/>
            <person name="Kaul S."/>
            <person name="Rounsley S.D."/>
            <person name="Shea T.P."/>
            <person name="Benito M.-I."/>
            <person name="Town C.D."/>
            <person name="Fujii C.Y."/>
            <person name="Mason T.M."/>
            <person name="Bowman C.L."/>
            <person name="Barnstead M.E."/>
            <person name="Feldblyum T.V."/>
            <person name="Buell C.R."/>
            <person name="Ketchum K.A."/>
            <person name="Lee J.J."/>
            <person name="Ronning C.M."/>
            <person name="Koo H.L."/>
            <person name="Moffat K.S."/>
            <person name="Cronin L.A."/>
            <person name="Shen M."/>
            <person name="Pai G."/>
            <person name="Van Aken S."/>
            <person name="Umayam L."/>
            <person name="Tallon L.J."/>
            <person name="Gill J.E."/>
            <person name="Adams M.D."/>
            <person name="Carrera A.J."/>
            <person name="Creasy T.H."/>
            <person name="Goodman H.M."/>
            <person name="Somerville C.R."/>
            <person name="Copenhaver G.P."/>
            <person name="Preuss D."/>
            <person name="Nierman W.C."/>
            <person name="White O."/>
            <person name="Eisen J.A."/>
            <person name="Salzberg S.L."/>
            <person name="Fraser C.M."/>
            <person name="Venter J.C."/>
        </authorList>
    </citation>
    <scope>NUCLEOTIDE SEQUENCE [LARGE SCALE GENOMIC DNA]</scope>
    <source>
        <strain>cv. Columbia</strain>
    </source>
</reference>
<reference key="2">
    <citation type="journal article" date="2017" name="Plant J.">
        <title>Araport11: a complete reannotation of the Arabidopsis thaliana reference genome.</title>
        <authorList>
            <person name="Cheng C.Y."/>
            <person name="Krishnakumar V."/>
            <person name="Chan A.P."/>
            <person name="Thibaud-Nissen F."/>
            <person name="Schobel S."/>
            <person name="Town C.D."/>
        </authorList>
    </citation>
    <scope>GENOME REANNOTATION</scope>
    <source>
        <strain>cv. Columbia</strain>
    </source>
</reference>
<organism>
    <name type="scientific">Arabidopsis thaliana</name>
    <name type="common">Mouse-ear cress</name>
    <dbReference type="NCBI Taxonomy" id="3702"/>
    <lineage>
        <taxon>Eukaryota</taxon>
        <taxon>Viridiplantae</taxon>
        <taxon>Streptophyta</taxon>
        <taxon>Embryophyta</taxon>
        <taxon>Tracheophyta</taxon>
        <taxon>Spermatophyta</taxon>
        <taxon>Magnoliopsida</taxon>
        <taxon>eudicotyledons</taxon>
        <taxon>Gunneridae</taxon>
        <taxon>Pentapetalae</taxon>
        <taxon>rosids</taxon>
        <taxon>malvids</taxon>
        <taxon>Brassicales</taxon>
        <taxon>Brassicaceae</taxon>
        <taxon>Camelineae</taxon>
        <taxon>Arabidopsis</taxon>
    </lineage>
</organism>